<keyword id="KW-0438">Lignin biosynthesis</keyword>
<keyword id="KW-0479">Metal-binding</keyword>
<keyword id="KW-0489">Methyltransferase</keyword>
<keyword id="KW-0949">S-adenosyl-L-methionine</keyword>
<keyword id="KW-0808">Transferase</keyword>
<feature type="chain" id="PRO_0000165682" description="Caffeoyl-CoA O-methyltransferase 2">
    <location>
        <begin position="1"/>
        <end position="247"/>
    </location>
</feature>
<feature type="binding site" evidence="1">
    <location>
        <position position="21"/>
    </location>
    <ligand>
        <name>substrate</name>
    </ligand>
</feature>
<feature type="binding site" evidence="2">
    <location>
        <position position="63"/>
    </location>
    <ligand>
        <name>S-adenosyl-L-methionine</name>
        <dbReference type="ChEBI" id="CHEBI:59789"/>
    </ligand>
</feature>
<feature type="binding site" evidence="2">
    <location>
        <position position="85"/>
    </location>
    <ligand>
        <name>S-adenosyl-L-methionine</name>
        <dbReference type="ChEBI" id="CHEBI:59789"/>
    </ligand>
</feature>
<feature type="binding site" evidence="2">
    <location>
        <begin position="87"/>
        <end position="88"/>
    </location>
    <ligand>
        <name>S-adenosyl-L-methionine</name>
        <dbReference type="ChEBI" id="CHEBI:59789"/>
    </ligand>
</feature>
<feature type="binding site" evidence="2">
    <location>
        <position position="93"/>
    </location>
    <ligand>
        <name>S-adenosyl-L-methionine</name>
        <dbReference type="ChEBI" id="CHEBI:59789"/>
    </ligand>
</feature>
<feature type="binding site" evidence="2">
    <location>
        <position position="111"/>
    </location>
    <ligand>
        <name>S-adenosyl-L-methionine</name>
        <dbReference type="ChEBI" id="CHEBI:59789"/>
    </ligand>
</feature>
<feature type="binding site" evidence="2">
    <location>
        <position position="140"/>
    </location>
    <ligand>
        <name>S-adenosyl-L-methionine</name>
        <dbReference type="ChEBI" id="CHEBI:59789"/>
    </ligand>
</feature>
<feature type="binding site" evidence="2">
    <location>
        <position position="163"/>
    </location>
    <ligand>
        <name>a divalent metal cation</name>
        <dbReference type="ChEBI" id="CHEBI:60240"/>
    </ligand>
</feature>
<feature type="binding site" evidence="1">
    <location>
        <position position="163"/>
    </location>
    <ligand>
        <name>substrate</name>
    </ligand>
</feature>
<feature type="binding site" evidence="2">
    <location>
        <position position="165"/>
    </location>
    <ligand>
        <name>S-adenosyl-L-methionine</name>
        <dbReference type="ChEBI" id="CHEBI:59789"/>
    </ligand>
</feature>
<feature type="binding site" evidence="2">
    <location>
        <position position="189"/>
    </location>
    <ligand>
        <name>a divalent metal cation</name>
        <dbReference type="ChEBI" id="CHEBI:60240"/>
    </ligand>
</feature>
<feature type="binding site" evidence="2">
    <location>
        <position position="190"/>
    </location>
    <ligand>
        <name>a divalent metal cation</name>
        <dbReference type="ChEBI" id="CHEBI:60240"/>
    </ligand>
</feature>
<feature type="binding site" evidence="1">
    <location>
        <position position="194"/>
    </location>
    <ligand>
        <name>substrate</name>
    </ligand>
</feature>
<comment type="function">
    <text>Methylates caffeoyl-CoA to feruloyl-CoA and 5-hydroxyferuloyl-CoA to sinapoyl-CoA. Plays a role in the synthesis of feruloylated polysaccharides. Involved in the reinforcement of the plant cell wall. Also involved in the responding to wounding or pathogen challenge by the increased formation of cell wall-bound ferulic acid polymers.</text>
</comment>
<comment type="catalytic activity">
    <reaction>
        <text>(E)-caffeoyl-CoA + S-adenosyl-L-methionine = (E)-feruloyl-CoA + S-adenosyl-L-homocysteine + H(+)</text>
        <dbReference type="Rhea" id="RHEA:16925"/>
        <dbReference type="ChEBI" id="CHEBI:15378"/>
        <dbReference type="ChEBI" id="CHEBI:57856"/>
        <dbReference type="ChEBI" id="CHEBI:59789"/>
        <dbReference type="ChEBI" id="CHEBI:87136"/>
        <dbReference type="ChEBI" id="CHEBI:87305"/>
        <dbReference type="EC" id="2.1.1.104"/>
    </reaction>
</comment>
<comment type="cofactor">
    <cofactor evidence="1">
        <name>a divalent metal cation</name>
        <dbReference type="ChEBI" id="CHEBI:60240"/>
    </cofactor>
    <text evidence="1">Binds 1 divalent metal cation per subunit.</text>
</comment>
<comment type="pathway">
    <text>Aromatic compound metabolism; phenylpropanoid biosynthesis.</text>
</comment>
<comment type="similarity">
    <text evidence="2">Belongs to the class I-like SAM-binding methyltransferase superfamily. Cation-dependent O-methyltransferase family. CCoAMT subfamily.</text>
</comment>
<reference key="1">
    <citation type="submission" date="1999-07" db="EMBL/GenBank/DDBJ databases">
        <title>Molecular cloning, expression and substrate specificity of two caffeoyl-CoA O-methyltransferases from Eucalyptus globulus.</title>
        <authorList>
            <person name="De Melis L.E."/>
            <person name="Whiteman P.H."/>
            <person name="Stevenson T.W."/>
        </authorList>
    </citation>
    <scope>NUCLEOTIDE SEQUENCE [MRNA]</scope>
</reference>
<accession>Q9SWB8</accession>
<evidence type="ECO:0000250" key="1">
    <source>
        <dbReference type="UniProtKB" id="Q40313"/>
    </source>
</evidence>
<evidence type="ECO:0000255" key="2">
    <source>
        <dbReference type="PROSITE-ProRule" id="PRU01019"/>
    </source>
</evidence>
<dbReference type="EC" id="2.1.1.104"/>
<dbReference type="EMBL" id="AF168780">
    <property type="protein sequence ID" value="AAD50443.1"/>
    <property type="molecule type" value="mRNA"/>
</dbReference>
<dbReference type="SMR" id="Q9SWB8"/>
<dbReference type="UniPathway" id="UPA00711"/>
<dbReference type="GO" id="GO:0042409">
    <property type="term" value="F:caffeoyl-CoA O-methyltransferase activity"/>
    <property type="evidence" value="ECO:0007669"/>
    <property type="project" value="UniProtKB-EC"/>
</dbReference>
<dbReference type="GO" id="GO:0046872">
    <property type="term" value="F:metal ion binding"/>
    <property type="evidence" value="ECO:0007669"/>
    <property type="project" value="UniProtKB-KW"/>
</dbReference>
<dbReference type="GO" id="GO:0009809">
    <property type="term" value="P:lignin biosynthetic process"/>
    <property type="evidence" value="ECO:0007669"/>
    <property type="project" value="UniProtKB-KW"/>
</dbReference>
<dbReference type="GO" id="GO:0032259">
    <property type="term" value="P:methylation"/>
    <property type="evidence" value="ECO:0007669"/>
    <property type="project" value="UniProtKB-KW"/>
</dbReference>
<dbReference type="CDD" id="cd02440">
    <property type="entry name" value="AdoMet_MTases"/>
    <property type="match status" value="1"/>
</dbReference>
<dbReference type="FunFam" id="3.40.50.150:FF:000147">
    <property type="entry name" value="Caffeoyl-CoA O-methyltransferase 1"/>
    <property type="match status" value="1"/>
</dbReference>
<dbReference type="Gene3D" id="3.40.50.150">
    <property type="entry name" value="Vaccinia Virus protein VP39"/>
    <property type="match status" value="1"/>
</dbReference>
<dbReference type="InterPro" id="IPR050362">
    <property type="entry name" value="Cation-dep_OMT"/>
</dbReference>
<dbReference type="InterPro" id="IPR029063">
    <property type="entry name" value="SAM-dependent_MTases_sf"/>
</dbReference>
<dbReference type="InterPro" id="IPR002935">
    <property type="entry name" value="SAM_O-MeTrfase"/>
</dbReference>
<dbReference type="PANTHER" id="PTHR10509:SF84">
    <property type="entry name" value="CAFFEOYL-COA O-METHYLTRANSFERASE 1"/>
    <property type="match status" value="1"/>
</dbReference>
<dbReference type="PANTHER" id="PTHR10509">
    <property type="entry name" value="O-METHYLTRANSFERASE-RELATED"/>
    <property type="match status" value="1"/>
</dbReference>
<dbReference type="Pfam" id="PF01596">
    <property type="entry name" value="Methyltransf_3"/>
    <property type="match status" value="1"/>
</dbReference>
<dbReference type="SUPFAM" id="SSF53335">
    <property type="entry name" value="S-adenosyl-L-methionine-dependent methyltransferases"/>
    <property type="match status" value="1"/>
</dbReference>
<dbReference type="PROSITE" id="PS51682">
    <property type="entry name" value="SAM_OMT_I"/>
    <property type="match status" value="1"/>
</dbReference>
<proteinExistence type="evidence at transcript level"/>
<sequence>MAANAEPQQTQPAKHSEVGHKSLLQSDALYQYILETSVYPREPESMKELREITAKHPWNLMTTSADEGQFLNMLLKLINAKNTMEIGVYTGYSLLATALALPDDGKILAMDINRENFEIGLPVIEKAGLAHKIDFREGPALPLLDQLVQDEKNHGTYDFIFVDADKDNYINYHKRLIDLVKVGGLIGYDNTLWNGSVVAPADAPLRKYVRYYRDFVLELNKALAVDPRVEICMLPVGDGITLCRRVS</sequence>
<protein>
    <recommendedName>
        <fullName>Caffeoyl-CoA O-methyltransferase 2</fullName>
        <ecNumber>2.1.1.104</ecNumber>
    </recommendedName>
    <alternativeName>
        <fullName>Trans-caffeoyl-CoA 3-O-methyltransferase 2</fullName>
        <shortName>CCoAMT-2</shortName>
        <shortName>CCoAOMT-2</shortName>
    </alternativeName>
</protein>
<name>CAMT2_EUCGL</name>
<organism>
    <name type="scientific">Eucalyptus globulus</name>
    <name type="common">Tasmanian blue gum</name>
    <dbReference type="NCBI Taxonomy" id="34317"/>
    <lineage>
        <taxon>Eukaryota</taxon>
        <taxon>Viridiplantae</taxon>
        <taxon>Streptophyta</taxon>
        <taxon>Embryophyta</taxon>
        <taxon>Tracheophyta</taxon>
        <taxon>Spermatophyta</taxon>
        <taxon>Magnoliopsida</taxon>
        <taxon>eudicotyledons</taxon>
        <taxon>Gunneridae</taxon>
        <taxon>Pentapetalae</taxon>
        <taxon>rosids</taxon>
        <taxon>malvids</taxon>
        <taxon>Myrtales</taxon>
        <taxon>Myrtaceae</taxon>
        <taxon>Myrtoideae</taxon>
        <taxon>Eucalypteae</taxon>
        <taxon>Eucalyptus</taxon>
    </lineage>
</organism>
<gene>
    <name type="primary">CCOAOMT2</name>
</gene>